<name>RL29_VIBC3</name>
<comment type="similarity">
    <text evidence="1">Belongs to the universal ribosomal protein uL29 family.</text>
</comment>
<protein>
    <recommendedName>
        <fullName evidence="1">Large ribosomal subunit protein uL29</fullName>
    </recommendedName>
    <alternativeName>
        <fullName evidence="2">50S ribosomal protein L29</fullName>
    </alternativeName>
</protein>
<keyword id="KW-0687">Ribonucleoprotein</keyword>
<keyword id="KW-0689">Ribosomal protein</keyword>
<reference key="1">
    <citation type="submission" date="2007-03" db="EMBL/GenBank/DDBJ databases">
        <authorList>
            <person name="Heidelberg J."/>
        </authorList>
    </citation>
    <scope>NUCLEOTIDE SEQUENCE [LARGE SCALE GENOMIC DNA]</scope>
    <source>
        <strain>ATCC 39541 / Classical Ogawa 395 / O395</strain>
    </source>
</reference>
<reference key="2">
    <citation type="journal article" date="2008" name="PLoS ONE">
        <title>A recalibrated molecular clock and independent origins for the cholera pandemic clones.</title>
        <authorList>
            <person name="Feng L."/>
            <person name="Reeves P.R."/>
            <person name="Lan R."/>
            <person name="Ren Y."/>
            <person name="Gao C."/>
            <person name="Zhou Z."/>
            <person name="Ren Y."/>
            <person name="Cheng J."/>
            <person name="Wang W."/>
            <person name="Wang J."/>
            <person name="Qian W."/>
            <person name="Li D."/>
            <person name="Wang L."/>
        </authorList>
    </citation>
    <scope>NUCLEOTIDE SEQUENCE [LARGE SCALE GENOMIC DNA]</scope>
    <source>
        <strain>ATCC 39541 / Classical Ogawa 395 / O395</strain>
    </source>
</reference>
<dbReference type="EMBL" id="CP000627">
    <property type="protein sequence ID" value="ABQ21225.1"/>
    <property type="molecule type" value="Genomic_DNA"/>
</dbReference>
<dbReference type="EMBL" id="CP001235">
    <property type="protein sequence ID" value="ACP10687.1"/>
    <property type="molecule type" value="Genomic_DNA"/>
</dbReference>
<dbReference type="RefSeq" id="WP_000647192.1">
    <property type="nucleotide sequence ID" value="NZ_JAACZH010000007.1"/>
</dbReference>
<dbReference type="SMR" id="A5F558"/>
<dbReference type="GeneID" id="94012760"/>
<dbReference type="KEGG" id="vco:VC0395_A2166"/>
<dbReference type="KEGG" id="vcr:VC395_2701"/>
<dbReference type="PATRIC" id="fig|345073.21.peg.2601"/>
<dbReference type="eggNOG" id="COG0255">
    <property type="taxonomic scope" value="Bacteria"/>
</dbReference>
<dbReference type="HOGENOM" id="CLU_158491_1_2_6"/>
<dbReference type="OrthoDB" id="9815192at2"/>
<dbReference type="Proteomes" id="UP000000249">
    <property type="component" value="Chromosome 2"/>
</dbReference>
<dbReference type="GO" id="GO:0022625">
    <property type="term" value="C:cytosolic large ribosomal subunit"/>
    <property type="evidence" value="ECO:0007669"/>
    <property type="project" value="TreeGrafter"/>
</dbReference>
<dbReference type="GO" id="GO:0003735">
    <property type="term" value="F:structural constituent of ribosome"/>
    <property type="evidence" value="ECO:0007669"/>
    <property type="project" value="InterPro"/>
</dbReference>
<dbReference type="GO" id="GO:0006412">
    <property type="term" value="P:translation"/>
    <property type="evidence" value="ECO:0007669"/>
    <property type="project" value="UniProtKB-UniRule"/>
</dbReference>
<dbReference type="CDD" id="cd00427">
    <property type="entry name" value="Ribosomal_L29_HIP"/>
    <property type="match status" value="1"/>
</dbReference>
<dbReference type="FunFam" id="1.10.287.310:FF:000001">
    <property type="entry name" value="50S ribosomal protein L29"/>
    <property type="match status" value="1"/>
</dbReference>
<dbReference type="Gene3D" id="1.10.287.310">
    <property type="match status" value="1"/>
</dbReference>
<dbReference type="HAMAP" id="MF_00374">
    <property type="entry name" value="Ribosomal_uL29"/>
    <property type="match status" value="1"/>
</dbReference>
<dbReference type="InterPro" id="IPR050063">
    <property type="entry name" value="Ribosomal_protein_uL29"/>
</dbReference>
<dbReference type="InterPro" id="IPR001854">
    <property type="entry name" value="Ribosomal_uL29"/>
</dbReference>
<dbReference type="InterPro" id="IPR018254">
    <property type="entry name" value="Ribosomal_uL29_CS"/>
</dbReference>
<dbReference type="InterPro" id="IPR036049">
    <property type="entry name" value="Ribosomal_uL29_sf"/>
</dbReference>
<dbReference type="NCBIfam" id="TIGR00012">
    <property type="entry name" value="L29"/>
    <property type="match status" value="1"/>
</dbReference>
<dbReference type="PANTHER" id="PTHR10916">
    <property type="entry name" value="60S RIBOSOMAL PROTEIN L35/50S RIBOSOMAL PROTEIN L29"/>
    <property type="match status" value="1"/>
</dbReference>
<dbReference type="PANTHER" id="PTHR10916:SF0">
    <property type="entry name" value="LARGE RIBOSOMAL SUBUNIT PROTEIN UL29C"/>
    <property type="match status" value="1"/>
</dbReference>
<dbReference type="Pfam" id="PF00831">
    <property type="entry name" value="Ribosomal_L29"/>
    <property type="match status" value="1"/>
</dbReference>
<dbReference type="SUPFAM" id="SSF46561">
    <property type="entry name" value="Ribosomal protein L29 (L29p)"/>
    <property type="match status" value="1"/>
</dbReference>
<dbReference type="PROSITE" id="PS00579">
    <property type="entry name" value="RIBOSOMAL_L29"/>
    <property type="match status" value="1"/>
</dbReference>
<feature type="chain" id="PRO_1000072149" description="Large ribosomal subunit protein uL29">
    <location>
        <begin position="1"/>
        <end position="63"/>
    </location>
</feature>
<proteinExistence type="inferred from homology"/>
<gene>
    <name evidence="1" type="primary">rpmC</name>
    <name type="ordered locus">VC0395_A2166</name>
    <name type="ordered locus">VC395_2701</name>
</gene>
<evidence type="ECO:0000255" key="1">
    <source>
        <dbReference type="HAMAP-Rule" id="MF_00374"/>
    </source>
</evidence>
<evidence type="ECO:0000305" key="2"/>
<accession>A5F558</accession>
<accession>C3LXI7</accession>
<sequence length="63" mass="7163">MKAQDLREKSVEELNSELLNLLKEQFNLRMQAATGQLQQTHTLKAVRRDIARVKTVLTEKAGA</sequence>
<organism>
    <name type="scientific">Vibrio cholerae serotype O1 (strain ATCC 39541 / Classical Ogawa 395 / O395)</name>
    <dbReference type="NCBI Taxonomy" id="345073"/>
    <lineage>
        <taxon>Bacteria</taxon>
        <taxon>Pseudomonadati</taxon>
        <taxon>Pseudomonadota</taxon>
        <taxon>Gammaproteobacteria</taxon>
        <taxon>Vibrionales</taxon>
        <taxon>Vibrionaceae</taxon>
        <taxon>Vibrio</taxon>
    </lineage>
</organism>